<keyword id="KW-0030">Aminoacyl-tRNA synthetase</keyword>
<keyword id="KW-0067">ATP-binding</keyword>
<keyword id="KW-0175">Coiled coil</keyword>
<keyword id="KW-0963">Cytoplasm</keyword>
<keyword id="KW-0436">Ligase</keyword>
<keyword id="KW-0547">Nucleotide-binding</keyword>
<keyword id="KW-0648">Protein biosynthesis</keyword>
<organism>
    <name type="scientific">Listeria innocua serovar 6a (strain ATCC BAA-680 / CLIP 11262)</name>
    <dbReference type="NCBI Taxonomy" id="272626"/>
    <lineage>
        <taxon>Bacteria</taxon>
        <taxon>Bacillati</taxon>
        <taxon>Bacillota</taxon>
        <taxon>Bacilli</taxon>
        <taxon>Bacillales</taxon>
        <taxon>Listeriaceae</taxon>
        <taxon>Listeria</taxon>
    </lineage>
</organism>
<dbReference type="EC" id="6.1.1.9" evidence="1"/>
<dbReference type="EMBL" id="AL596169">
    <property type="protein sequence ID" value="CAC96818.1"/>
    <property type="molecule type" value="Genomic_DNA"/>
</dbReference>
<dbReference type="PIR" id="AB1631">
    <property type="entry name" value="AB1631"/>
</dbReference>
<dbReference type="RefSeq" id="WP_010991601.1">
    <property type="nucleotide sequence ID" value="NC_003212.1"/>
</dbReference>
<dbReference type="SMR" id="Q92BG2"/>
<dbReference type="STRING" id="272626.gene:17565918"/>
<dbReference type="KEGG" id="lin:valS"/>
<dbReference type="eggNOG" id="COG0525">
    <property type="taxonomic scope" value="Bacteria"/>
</dbReference>
<dbReference type="HOGENOM" id="CLU_001493_0_2_9"/>
<dbReference type="OrthoDB" id="9810365at2"/>
<dbReference type="Proteomes" id="UP000002513">
    <property type="component" value="Chromosome"/>
</dbReference>
<dbReference type="GO" id="GO:0005829">
    <property type="term" value="C:cytosol"/>
    <property type="evidence" value="ECO:0007669"/>
    <property type="project" value="TreeGrafter"/>
</dbReference>
<dbReference type="GO" id="GO:0002161">
    <property type="term" value="F:aminoacyl-tRNA deacylase activity"/>
    <property type="evidence" value="ECO:0007669"/>
    <property type="project" value="InterPro"/>
</dbReference>
<dbReference type="GO" id="GO:0005524">
    <property type="term" value="F:ATP binding"/>
    <property type="evidence" value="ECO:0007669"/>
    <property type="project" value="UniProtKB-UniRule"/>
</dbReference>
<dbReference type="GO" id="GO:0004832">
    <property type="term" value="F:valine-tRNA ligase activity"/>
    <property type="evidence" value="ECO:0007669"/>
    <property type="project" value="UniProtKB-UniRule"/>
</dbReference>
<dbReference type="GO" id="GO:0006438">
    <property type="term" value="P:valyl-tRNA aminoacylation"/>
    <property type="evidence" value="ECO:0007669"/>
    <property type="project" value="UniProtKB-UniRule"/>
</dbReference>
<dbReference type="CDD" id="cd07962">
    <property type="entry name" value="Anticodon_Ia_Val"/>
    <property type="match status" value="1"/>
</dbReference>
<dbReference type="CDD" id="cd00817">
    <property type="entry name" value="ValRS_core"/>
    <property type="match status" value="1"/>
</dbReference>
<dbReference type="FunFam" id="1.10.287.380:FF:000001">
    <property type="entry name" value="Valine--tRNA ligase"/>
    <property type="match status" value="1"/>
</dbReference>
<dbReference type="FunFam" id="1.10.730.10:FF:000014">
    <property type="entry name" value="Valine--tRNA ligase"/>
    <property type="match status" value="1"/>
</dbReference>
<dbReference type="FunFam" id="3.40.50.620:FF:000032">
    <property type="entry name" value="Valine--tRNA ligase"/>
    <property type="match status" value="1"/>
</dbReference>
<dbReference type="FunFam" id="3.40.50.620:FF:000098">
    <property type="entry name" value="Valine--tRNA ligase"/>
    <property type="match status" value="1"/>
</dbReference>
<dbReference type="FunFam" id="3.90.740.10:FF:000005">
    <property type="entry name" value="Valine--tRNA ligase, mitochondrial"/>
    <property type="match status" value="1"/>
</dbReference>
<dbReference type="Gene3D" id="3.40.50.620">
    <property type="entry name" value="HUPs"/>
    <property type="match status" value="2"/>
</dbReference>
<dbReference type="Gene3D" id="1.10.730.10">
    <property type="entry name" value="Isoleucyl-tRNA Synthetase, Domain 1"/>
    <property type="match status" value="1"/>
</dbReference>
<dbReference type="Gene3D" id="1.10.287.380">
    <property type="entry name" value="Valyl-tRNA synthetase, C-terminal domain"/>
    <property type="match status" value="1"/>
</dbReference>
<dbReference type="Gene3D" id="3.90.740.10">
    <property type="entry name" value="Valyl/Leucyl/Isoleucyl-tRNA synthetase, editing domain"/>
    <property type="match status" value="1"/>
</dbReference>
<dbReference type="HAMAP" id="MF_02004">
    <property type="entry name" value="Val_tRNA_synth_type1"/>
    <property type="match status" value="1"/>
</dbReference>
<dbReference type="InterPro" id="IPR001412">
    <property type="entry name" value="aa-tRNA-synth_I_CS"/>
</dbReference>
<dbReference type="InterPro" id="IPR002300">
    <property type="entry name" value="aa-tRNA-synth_Ia"/>
</dbReference>
<dbReference type="InterPro" id="IPR033705">
    <property type="entry name" value="Anticodon_Ia_Val"/>
</dbReference>
<dbReference type="InterPro" id="IPR013155">
    <property type="entry name" value="M/V/L/I-tRNA-synth_anticd-bd"/>
</dbReference>
<dbReference type="InterPro" id="IPR014729">
    <property type="entry name" value="Rossmann-like_a/b/a_fold"/>
</dbReference>
<dbReference type="InterPro" id="IPR010978">
    <property type="entry name" value="tRNA-bd_arm"/>
</dbReference>
<dbReference type="InterPro" id="IPR009080">
    <property type="entry name" value="tRNAsynth_Ia_anticodon-bd"/>
</dbReference>
<dbReference type="InterPro" id="IPR037118">
    <property type="entry name" value="Val-tRNA_synth_C_sf"/>
</dbReference>
<dbReference type="InterPro" id="IPR019499">
    <property type="entry name" value="Val-tRNA_synth_tRNA-bd"/>
</dbReference>
<dbReference type="InterPro" id="IPR009008">
    <property type="entry name" value="Val/Leu/Ile-tRNA-synth_edit"/>
</dbReference>
<dbReference type="InterPro" id="IPR002303">
    <property type="entry name" value="Valyl-tRNA_ligase"/>
</dbReference>
<dbReference type="NCBIfam" id="NF004349">
    <property type="entry name" value="PRK05729.1"/>
    <property type="match status" value="1"/>
</dbReference>
<dbReference type="NCBIfam" id="TIGR00422">
    <property type="entry name" value="valS"/>
    <property type="match status" value="1"/>
</dbReference>
<dbReference type="PANTHER" id="PTHR11946:SF93">
    <property type="entry name" value="VALINE--TRNA LIGASE, CHLOROPLASTIC_MITOCHONDRIAL 2"/>
    <property type="match status" value="1"/>
</dbReference>
<dbReference type="PANTHER" id="PTHR11946">
    <property type="entry name" value="VALYL-TRNA SYNTHETASES"/>
    <property type="match status" value="1"/>
</dbReference>
<dbReference type="Pfam" id="PF08264">
    <property type="entry name" value="Anticodon_1"/>
    <property type="match status" value="1"/>
</dbReference>
<dbReference type="Pfam" id="PF00133">
    <property type="entry name" value="tRNA-synt_1"/>
    <property type="match status" value="1"/>
</dbReference>
<dbReference type="Pfam" id="PF10458">
    <property type="entry name" value="Val_tRNA-synt_C"/>
    <property type="match status" value="1"/>
</dbReference>
<dbReference type="PRINTS" id="PR00986">
    <property type="entry name" value="TRNASYNTHVAL"/>
</dbReference>
<dbReference type="SUPFAM" id="SSF47323">
    <property type="entry name" value="Anticodon-binding domain of a subclass of class I aminoacyl-tRNA synthetases"/>
    <property type="match status" value="1"/>
</dbReference>
<dbReference type="SUPFAM" id="SSF52374">
    <property type="entry name" value="Nucleotidylyl transferase"/>
    <property type="match status" value="1"/>
</dbReference>
<dbReference type="SUPFAM" id="SSF46589">
    <property type="entry name" value="tRNA-binding arm"/>
    <property type="match status" value="1"/>
</dbReference>
<dbReference type="SUPFAM" id="SSF50677">
    <property type="entry name" value="ValRS/IleRS/LeuRS editing domain"/>
    <property type="match status" value="1"/>
</dbReference>
<dbReference type="PROSITE" id="PS00178">
    <property type="entry name" value="AA_TRNA_LIGASE_I"/>
    <property type="match status" value="1"/>
</dbReference>
<comment type="function">
    <text evidence="1">Catalyzes the attachment of valine to tRNA(Val). As ValRS can inadvertently accommodate and process structurally similar amino acids such as threonine, to avoid such errors, it has a 'posttransfer' editing activity that hydrolyzes mischarged Thr-tRNA(Val) in a tRNA-dependent manner.</text>
</comment>
<comment type="catalytic activity">
    <reaction evidence="1">
        <text>tRNA(Val) + L-valine + ATP = L-valyl-tRNA(Val) + AMP + diphosphate</text>
        <dbReference type="Rhea" id="RHEA:10704"/>
        <dbReference type="Rhea" id="RHEA-COMP:9672"/>
        <dbReference type="Rhea" id="RHEA-COMP:9708"/>
        <dbReference type="ChEBI" id="CHEBI:30616"/>
        <dbReference type="ChEBI" id="CHEBI:33019"/>
        <dbReference type="ChEBI" id="CHEBI:57762"/>
        <dbReference type="ChEBI" id="CHEBI:78442"/>
        <dbReference type="ChEBI" id="CHEBI:78537"/>
        <dbReference type="ChEBI" id="CHEBI:456215"/>
        <dbReference type="EC" id="6.1.1.9"/>
    </reaction>
</comment>
<comment type="subunit">
    <text evidence="1">Monomer.</text>
</comment>
<comment type="subcellular location">
    <subcellularLocation>
        <location evidence="1">Cytoplasm</location>
    </subcellularLocation>
</comment>
<comment type="domain">
    <text evidence="1">ValRS has two distinct active sites: one for aminoacylation and one for editing. The misactivated threonine is translocated from the active site to the editing site.</text>
</comment>
<comment type="domain">
    <text evidence="1">The C-terminal coiled-coil domain is crucial for aminoacylation activity.</text>
</comment>
<comment type="similarity">
    <text evidence="1">Belongs to the class-I aminoacyl-tRNA synthetase family. ValS type 1 subfamily.</text>
</comment>
<sequence>MTEQNEINMPTKYEPSNVEAGKYKWWLEKEFFKAEGNSDKKPYSIVIPPPNVTGKLHLGHAWDTTLQDIITRMKRMQGFDTLYLPGMDHAGIATQAKVEAKLKEENISRYDLGREKFVDKTWEWKEEYADFIREQWEKLGLGLDYSRERFTLDAGLSDAVKKVFVTLYNKGLIYRGQYIINWDPEAKTALSDIEVIHKDIEGSFYHLKYPLTDGSGYLEVATTRPETIPGDTAVAVHPKDERYQHLIGKTIMLPILNREIPIVADEYVEREFGSGAVKITPAHDPNDFEVGNRHDLPRIIVMHEDGTMNDNAGKYDGLDRFVARKAIIQDFKDLGLFIKQEPHLHSVGHSERTGAVVEPYLSLQWFVKMEPLAAEALALQKTEDKVNFVPARFEKTYETWMDNIHDWCISRQLWWGHRIPAWYHKETGEIYVGENEPENLDQWEQDEDVLDTWFSSALWPFSTMGWPDTENPDYKHFFPTNTLVTGYDIIFFWVSRMIFQSVEFTGERPFKDTLIHGLVRDSEGRKMSKSLGNGVDPIEVIDKYGADSLRYTLATGSSPGQDLKFSFEKVESTWNFINKIWNASRFVLMNLDGMKYDEIDLSNVTEVSDKWILTRLNETIQAVTSLGEKYEFGEVGRTLYNFIWDDFCDWYIEIAKIPLYGEDEVAKQTTRSVLAYTLNTTMRLLHPFMPFVTEEIWQNLPHEGESITISNWPEVNEQQMDSKASTAMRTLVEVIRAVRNIRAEVNTPLSKSIVLEIKPKDETYKEILEQNISYIERFCNPEKVTIAFDIEPSKTAMTAVVSGAEIFIPLEALIDLDLEIARLEKELEKWNKEVARVQGKLNNERFISKAPENVVAEERLKEKDYLEKKASVLERIETLKEV</sequence>
<feature type="chain" id="PRO_0000224499" description="Valine--tRNA ligase">
    <location>
        <begin position="1"/>
        <end position="882"/>
    </location>
</feature>
<feature type="coiled-coil region" evidence="1">
    <location>
        <begin position="810"/>
        <end position="881"/>
    </location>
</feature>
<feature type="short sequence motif" description="'HIGH' region">
    <location>
        <begin position="50"/>
        <end position="60"/>
    </location>
</feature>
<feature type="short sequence motif" description="'KMSKS' region">
    <location>
        <begin position="526"/>
        <end position="530"/>
    </location>
</feature>
<feature type="binding site" evidence="1">
    <location>
        <position position="529"/>
    </location>
    <ligand>
        <name>ATP</name>
        <dbReference type="ChEBI" id="CHEBI:30616"/>
    </ligand>
</feature>
<gene>
    <name evidence="1" type="primary">valS</name>
    <name type="ordered locus">lin1587</name>
</gene>
<reference key="1">
    <citation type="journal article" date="2001" name="Science">
        <title>Comparative genomics of Listeria species.</title>
        <authorList>
            <person name="Glaser P."/>
            <person name="Frangeul L."/>
            <person name="Buchrieser C."/>
            <person name="Rusniok C."/>
            <person name="Amend A."/>
            <person name="Baquero F."/>
            <person name="Berche P."/>
            <person name="Bloecker H."/>
            <person name="Brandt P."/>
            <person name="Chakraborty T."/>
            <person name="Charbit A."/>
            <person name="Chetouani F."/>
            <person name="Couve E."/>
            <person name="de Daruvar A."/>
            <person name="Dehoux P."/>
            <person name="Domann E."/>
            <person name="Dominguez-Bernal G."/>
            <person name="Duchaud E."/>
            <person name="Durant L."/>
            <person name="Dussurget O."/>
            <person name="Entian K.-D."/>
            <person name="Fsihi H."/>
            <person name="Garcia-del Portillo F."/>
            <person name="Garrido P."/>
            <person name="Gautier L."/>
            <person name="Goebel W."/>
            <person name="Gomez-Lopez N."/>
            <person name="Hain T."/>
            <person name="Hauf J."/>
            <person name="Jackson D."/>
            <person name="Jones L.-M."/>
            <person name="Kaerst U."/>
            <person name="Kreft J."/>
            <person name="Kuhn M."/>
            <person name="Kunst F."/>
            <person name="Kurapkat G."/>
            <person name="Madueno E."/>
            <person name="Maitournam A."/>
            <person name="Mata Vicente J."/>
            <person name="Ng E."/>
            <person name="Nedjari H."/>
            <person name="Nordsiek G."/>
            <person name="Novella S."/>
            <person name="de Pablos B."/>
            <person name="Perez-Diaz J.-C."/>
            <person name="Purcell R."/>
            <person name="Remmel B."/>
            <person name="Rose M."/>
            <person name="Schlueter T."/>
            <person name="Simoes N."/>
            <person name="Tierrez A."/>
            <person name="Vazquez-Boland J.-A."/>
            <person name="Voss H."/>
            <person name="Wehland J."/>
            <person name="Cossart P."/>
        </authorList>
    </citation>
    <scope>NUCLEOTIDE SEQUENCE [LARGE SCALE GENOMIC DNA]</scope>
    <source>
        <strain>ATCC BAA-680 / CLIP 11262</strain>
    </source>
</reference>
<name>SYV_LISIN</name>
<protein>
    <recommendedName>
        <fullName evidence="1">Valine--tRNA ligase</fullName>
        <ecNumber evidence="1">6.1.1.9</ecNumber>
    </recommendedName>
    <alternativeName>
        <fullName evidence="1">Valyl-tRNA synthetase</fullName>
        <shortName evidence="1">ValRS</shortName>
    </alternativeName>
</protein>
<evidence type="ECO:0000255" key="1">
    <source>
        <dbReference type="HAMAP-Rule" id="MF_02004"/>
    </source>
</evidence>
<proteinExistence type="inferred from homology"/>
<accession>Q92BG2</accession>